<dbReference type="EMBL" id="AE014134">
    <property type="protein sequence ID" value="AAF51310.2"/>
    <property type="molecule type" value="Genomic_DNA"/>
</dbReference>
<dbReference type="EMBL" id="AE014134">
    <property type="protein sequence ID" value="AGB92437.1"/>
    <property type="molecule type" value="Genomic_DNA"/>
</dbReference>
<dbReference type="EMBL" id="AY051677">
    <property type="protein sequence ID" value="AAK93101.1"/>
    <property type="molecule type" value="mRNA"/>
</dbReference>
<dbReference type="EMBL" id="BT126028">
    <property type="protein sequence ID" value="ADY17727.1"/>
    <property type="molecule type" value="mRNA"/>
</dbReference>
<dbReference type="RefSeq" id="NP_001259900.1">
    <molecule id="F0JAI6-1"/>
    <property type="nucleotide sequence ID" value="NM_001272971.1"/>
</dbReference>
<dbReference type="RefSeq" id="NP_722756.1">
    <molecule id="F0JAI6-2"/>
    <property type="nucleotide sequence ID" value="NM_164451.2"/>
</dbReference>
<dbReference type="SMR" id="F0JAI6"/>
<dbReference type="FunCoup" id="F0JAI6">
    <property type="interactions" value="6"/>
</dbReference>
<dbReference type="IntAct" id="F0JAI6">
    <property type="interactions" value="1"/>
</dbReference>
<dbReference type="STRING" id="7227.FBpp0302684"/>
<dbReference type="PaxDb" id="7227-FBpp0302684"/>
<dbReference type="DNASU" id="48440"/>
<dbReference type="EnsemblMetazoa" id="FBtr0077825">
    <molecule id="F0JAI6-2"/>
    <property type="protein sequence ID" value="FBpp0077498"/>
    <property type="gene ID" value="FBgn0028952"/>
</dbReference>
<dbReference type="EnsemblMetazoa" id="FBtr0310547">
    <molecule id="F0JAI6-1"/>
    <property type="protein sequence ID" value="FBpp0302684"/>
    <property type="gene ID" value="FBgn0028952"/>
</dbReference>
<dbReference type="GeneID" id="48440"/>
<dbReference type="KEGG" id="dme:Dmel_CG31672"/>
<dbReference type="UCSC" id="CG31672-RA">
    <property type="organism name" value="d. melanogaster"/>
</dbReference>
<dbReference type="AGR" id="FB:FBgn0028952"/>
<dbReference type="CTD" id="48440"/>
<dbReference type="FlyBase" id="FBgn0028952">
    <property type="gene designation" value="Kebab"/>
</dbReference>
<dbReference type="VEuPathDB" id="VectorBase:FBgn0028952"/>
<dbReference type="InParanoid" id="F0JAI6"/>
<dbReference type="OMA" id="PIRPKVI"/>
<dbReference type="OrthoDB" id="7868318at2759"/>
<dbReference type="BioGRID-ORCS" id="48440">
    <property type="hits" value="0 hits in 1 CRISPR screen"/>
</dbReference>
<dbReference type="GenomeRNAi" id="48440"/>
<dbReference type="PRO" id="PR:F0JAI6"/>
<dbReference type="Proteomes" id="UP000000803">
    <property type="component" value="Chromosome 2L"/>
</dbReference>
<dbReference type="Bgee" id="FBgn0028952">
    <property type="expression patterns" value="Expressed in early-mid elongation-stage spermatid (Drosophila) in testis and 23 other cell types or tissues"/>
</dbReference>
<dbReference type="ExpressionAtlas" id="F0JAI6">
    <property type="expression patterns" value="baseline and differential"/>
</dbReference>
<dbReference type="GO" id="GO:0000776">
    <property type="term" value="C:kinetochore"/>
    <property type="evidence" value="ECO:0000314"/>
    <property type="project" value="FlyBase"/>
</dbReference>
<dbReference type="GO" id="GO:0048471">
    <property type="term" value="C:perinuclear region of cytoplasm"/>
    <property type="evidence" value="ECO:0000314"/>
    <property type="project" value="FlyBase"/>
</dbReference>
<dbReference type="GO" id="GO:0005876">
    <property type="term" value="C:spindle microtubule"/>
    <property type="evidence" value="ECO:0000314"/>
    <property type="project" value="FlyBase"/>
</dbReference>
<dbReference type="GO" id="GO:0043515">
    <property type="term" value="F:kinetochore binding"/>
    <property type="evidence" value="ECO:0000314"/>
    <property type="project" value="FlyBase"/>
</dbReference>
<dbReference type="GO" id="GO:0008017">
    <property type="term" value="F:microtubule binding"/>
    <property type="evidence" value="ECO:0000314"/>
    <property type="project" value="FlyBase"/>
</dbReference>
<dbReference type="Gene3D" id="1.10.418.30">
    <property type="entry name" value="Ncd80 complex, Ncd80 subunit"/>
    <property type="match status" value="1"/>
</dbReference>
<dbReference type="InterPro" id="IPR038273">
    <property type="entry name" value="Ndc80_sf"/>
</dbReference>
<gene>
    <name evidence="4" type="primary">Kebab</name>
    <name evidence="8" type="ORF">CG31672</name>
</gene>
<keyword id="KW-0025">Alternative splicing</keyword>
<keyword id="KW-0137">Centromere</keyword>
<keyword id="KW-0158">Chromosome</keyword>
<keyword id="KW-0175">Coiled coil</keyword>
<keyword id="KW-0963">Cytoplasm</keyword>
<keyword id="KW-0206">Cytoskeleton</keyword>
<keyword id="KW-0995">Kinetochore</keyword>
<keyword id="KW-1185">Reference proteome</keyword>
<sequence>MSSMAKSPDMRTPGCCSPLRTKELLERQRSSRCTPAKGYLTPRNCQSPKHPEMRIPSIFVTDADYGLERPKQLLQRLERSLYRSSSASKVPPKHSLLASQNRQRTWEGPKTPEFRSRTNKTIPASEPRPRRAKELLEDLRSKHQGTPATKIPSQRNPKENQELSKSHTCIPSSEPQPIRPKLILERERQESITNRLASTSIDRLKTKPPRSSFTSSRLLVPQMGFSYPKDPKRLHESDKGIKLTTSKRKLDFKTELGTDWLRRELEKIGKEWRKKTDYQLRQLISGFVKQLVRLLPFNGITFSHLSRDCYVQQMVEALQQLQYTKKVNKSWLQTPNSTQAIAHVLELLNFLLDVLEHRKGEGMCALPVVSEKQRIEQLASASGTSYDVMSLQQKFENIKIEKERLNNYQESLMPESPVSKDMDKVTERDGNQDFVRLLDFQKETLHELQLQRLRLQEFSELVSLAKIKLKRCCKANKQCIEAFNDQIQDLADCVVLRNRNIGLLTQLHLNDNPKEEELHERMKQLQRLYEDNYSNLLQLNIKPPQGSP</sequence>
<reference evidence="9" key="1">
    <citation type="journal article" date="2000" name="Science">
        <title>The genome sequence of Drosophila melanogaster.</title>
        <authorList>
            <person name="Adams M.D."/>
            <person name="Celniker S.E."/>
            <person name="Holt R.A."/>
            <person name="Evans C.A."/>
            <person name="Gocayne J.D."/>
            <person name="Amanatides P.G."/>
            <person name="Scherer S.E."/>
            <person name="Li P.W."/>
            <person name="Hoskins R.A."/>
            <person name="Galle R.F."/>
            <person name="George R.A."/>
            <person name="Lewis S.E."/>
            <person name="Richards S."/>
            <person name="Ashburner M."/>
            <person name="Henderson S.N."/>
            <person name="Sutton G.G."/>
            <person name="Wortman J.R."/>
            <person name="Yandell M.D."/>
            <person name="Zhang Q."/>
            <person name="Chen L.X."/>
            <person name="Brandon R.C."/>
            <person name="Rogers Y.-H.C."/>
            <person name="Blazej R.G."/>
            <person name="Champe M."/>
            <person name="Pfeiffer B.D."/>
            <person name="Wan K.H."/>
            <person name="Doyle C."/>
            <person name="Baxter E.G."/>
            <person name="Helt G."/>
            <person name="Nelson C.R."/>
            <person name="Miklos G.L.G."/>
            <person name="Abril J.F."/>
            <person name="Agbayani A."/>
            <person name="An H.-J."/>
            <person name="Andrews-Pfannkoch C."/>
            <person name="Baldwin D."/>
            <person name="Ballew R.M."/>
            <person name="Basu A."/>
            <person name="Baxendale J."/>
            <person name="Bayraktaroglu L."/>
            <person name="Beasley E.M."/>
            <person name="Beeson K.Y."/>
            <person name="Benos P.V."/>
            <person name="Berman B.P."/>
            <person name="Bhandari D."/>
            <person name="Bolshakov S."/>
            <person name="Borkova D."/>
            <person name="Botchan M.R."/>
            <person name="Bouck J."/>
            <person name="Brokstein P."/>
            <person name="Brottier P."/>
            <person name="Burtis K.C."/>
            <person name="Busam D.A."/>
            <person name="Butler H."/>
            <person name="Cadieu E."/>
            <person name="Center A."/>
            <person name="Chandra I."/>
            <person name="Cherry J.M."/>
            <person name="Cawley S."/>
            <person name="Dahlke C."/>
            <person name="Davenport L.B."/>
            <person name="Davies P."/>
            <person name="de Pablos B."/>
            <person name="Delcher A."/>
            <person name="Deng Z."/>
            <person name="Mays A.D."/>
            <person name="Dew I."/>
            <person name="Dietz S.M."/>
            <person name="Dodson K."/>
            <person name="Doup L.E."/>
            <person name="Downes M."/>
            <person name="Dugan-Rocha S."/>
            <person name="Dunkov B.C."/>
            <person name="Dunn P."/>
            <person name="Durbin K.J."/>
            <person name="Evangelista C.C."/>
            <person name="Ferraz C."/>
            <person name="Ferriera S."/>
            <person name="Fleischmann W."/>
            <person name="Fosler C."/>
            <person name="Gabrielian A.E."/>
            <person name="Garg N.S."/>
            <person name="Gelbart W.M."/>
            <person name="Glasser K."/>
            <person name="Glodek A."/>
            <person name="Gong F."/>
            <person name="Gorrell J.H."/>
            <person name="Gu Z."/>
            <person name="Guan P."/>
            <person name="Harris M."/>
            <person name="Harris N.L."/>
            <person name="Harvey D.A."/>
            <person name="Heiman T.J."/>
            <person name="Hernandez J.R."/>
            <person name="Houck J."/>
            <person name="Hostin D."/>
            <person name="Houston K.A."/>
            <person name="Howland T.J."/>
            <person name="Wei M.-H."/>
            <person name="Ibegwam C."/>
            <person name="Jalali M."/>
            <person name="Kalush F."/>
            <person name="Karpen G.H."/>
            <person name="Ke Z."/>
            <person name="Kennison J.A."/>
            <person name="Ketchum K.A."/>
            <person name="Kimmel B.E."/>
            <person name="Kodira C.D."/>
            <person name="Kraft C.L."/>
            <person name="Kravitz S."/>
            <person name="Kulp D."/>
            <person name="Lai Z."/>
            <person name="Lasko P."/>
            <person name="Lei Y."/>
            <person name="Levitsky A.A."/>
            <person name="Li J.H."/>
            <person name="Li Z."/>
            <person name="Liang Y."/>
            <person name="Lin X."/>
            <person name="Liu X."/>
            <person name="Mattei B."/>
            <person name="McIntosh T.C."/>
            <person name="McLeod M.P."/>
            <person name="McPherson D."/>
            <person name="Merkulov G."/>
            <person name="Milshina N.V."/>
            <person name="Mobarry C."/>
            <person name="Morris J."/>
            <person name="Moshrefi A."/>
            <person name="Mount S.M."/>
            <person name="Moy M."/>
            <person name="Murphy B."/>
            <person name="Murphy L."/>
            <person name="Muzny D.M."/>
            <person name="Nelson D.L."/>
            <person name="Nelson D.R."/>
            <person name="Nelson K.A."/>
            <person name="Nixon K."/>
            <person name="Nusskern D.R."/>
            <person name="Pacleb J.M."/>
            <person name="Palazzolo M."/>
            <person name="Pittman G.S."/>
            <person name="Pan S."/>
            <person name="Pollard J."/>
            <person name="Puri V."/>
            <person name="Reese M.G."/>
            <person name="Reinert K."/>
            <person name="Remington K."/>
            <person name="Saunders R.D.C."/>
            <person name="Scheeler F."/>
            <person name="Shen H."/>
            <person name="Shue B.C."/>
            <person name="Siden-Kiamos I."/>
            <person name="Simpson M."/>
            <person name="Skupski M.P."/>
            <person name="Smith T.J."/>
            <person name="Spier E."/>
            <person name="Spradling A.C."/>
            <person name="Stapleton M."/>
            <person name="Strong R."/>
            <person name="Sun E."/>
            <person name="Svirskas R."/>
            <person name="Tector C."/>
            <person name="Turner R."/>
            <person name="Venter E."/>
            <person name="Wang A.H."/>
            <person name="Wang X."/>
            <person name="Wang Z.-Y."/>
            <person name="Wassarman D.A."/>
            <person name="Weinstock G.M."/>
            <person name="Weissenbach J."/>
            <person name="Williams S.M."/>
            <person name="Woodage T."/>
            <person name="Worley K.C."/>
            <person name="Wu D."/>
            <person name="Yang S."/>
            <person name="Yao Q.A."/>
            <person name="Ye J."/>
            <person name="Yeh R.-F."/>
            <person name="Zaveri J.S."/>
            <person name="Zhan M."/>
            <person name="Zhang G."/>
            <person name="Zhao Q."/>
            <person name="Zheng L."/>
            <person name="Zheng X.H."/>
            <person name="Zhong F.N."/>
            <person name="Zhong W."/>
            <person name="Zhou X."/>
            <person name="Zhu S.C."/>
            <person name="Zhu X."/>
            <person name="Smith H.O."/>
            <person name="Gibbs R.A."/>
            <person name="Myers E.W."/>
            <person name="Rubin G.M."/>
            <person name="Venter J.C."/>
        </authorList>
    </citation>
    <scope>NUCLEOTIDE SEQUENCE [LARGE SCALE GENOMIC DNA]</scope>
    <source>
        <strain evidence="9">Berkeley</strain>
    </source>
</reference>
<reference evidence="9" key="2">
    <citation type="journal article" date="2002" name="Genome Biol.">
        <title>Annotation of the Drosophila melanogaster euchromatic genome: a systematic review.</title>
        <authorList>
            <person name="Misra S."/>
            <person name="Crosby M.A."/>
            <person name="Mungall C.J."/>
            <person name="Matthews B.B."/>
            <person name="Campbell K.S."/>
            <person name="Hradecky P."/>
            <person name="Huang Y."/>
            <person name="Kaminker J.S."/>
            <person name="Millburn G.H."/>
            <person name="Prochnik S.E."/>
            <person name="Smith C.D."/>
            <person name="Tupy J.L."/>
            <person name="Whitfield E.J."/>
            <person name="Bayraktaroglu L."/>
            <person name="Berman B.P."/>
            <person name="Bettencourt B.R."/>
            <person name="Celniker S.E."/>
            <person name="de Grey A.D.N.J."/>
            <person name="Drysdale R.A."/>
            <person name="Harris N.L."/>
            <person name="Richter J."/>
            <person name="Russo S."/>
            <person name="Schroeder A.J."/>
            <person name="Shu S.Q."/>
            <person name="Stapleton M."/>
            <person name="Yamada C."/>
            <person name="Ashburner M."/>
            <person name="Gelbart W.M."/>
            <person name="Rubin G.M."/>
            <person name="Lewis S.E."/>
        </authorList>
    </citation>
    <scope>GENOME REANNOTATION</scope>
    <source>
        <strain evidence="9">Berkeley</strain>
    </source>
</reference>
<reference evidence="6" key="3">
    <citation type="journal article" date="2002" name="Genome Biol.">
        <title>A Drosophila full-length cDNA resource.</title>
        <authorList>
            <person name="Stapleton M."/>
            <person name="Carlson J.W."/>
            <person name="Brokstein P."/>
            <person name="Yu C."/>
            <person name="Champe M."/>
            <person name="George R.A."/>
            <person name="Guarin H."/>
            <person name="Kronmiller B."/>
            <person name="Pacleb J.M."/>
            <person name="Park S."/>
            <person name="Wan K.H."/>
            <person name="Rubin G.M."/>
            <person name="Celniker S.E."/>
        </authorList>
    </citation>
    <scope>NUCLEOTIDE SEQUENCE [LARGE SCALE MRNA] (ISOFORM A)</scope>
    <source>
        <strain evidence="6">Berkeley</strain>
        <tissue evidence="6">Embryo</tissue>
    </source>
</reference>
<reference evidence="7" key="4">
    <citation type="submission" date="2011-02" db="EMBL/GenBank/DDBJ databases">
        <authorList>
            <person name="Carlson J."/>
            <person name="Booth B."/>
            <person name="Frise E."/>
            <person name="Park S."/>
            <person name="Wan K."/>
            <person name="Yu C."/>
            <person name="Celniker S."/>
        </authorList>
    </citation>
    <scope>NUCLEOTIDE SEQUENCE [LARGE SCALE MRNA] (ISOFORM B)</scope>
    <source>
        <strain evidence="7">Berkeley</strain>
        <tissue evidence="7">Embryo</tissue>
    </source>
</reference>
<reference evidence="5" key="5">
    <citation type="journal article" date="2011" name="PLoS ONE">
        <title>Kebab: kinetochore and EB1 associated basic protein that dynamically changes its localisation during Drosophila mitosis.</title>
        <authorList>
            <person name="Meireles A.M."/>
            <person name="Dzhindzhev N.S."/>
            <person name="Ohkura H."/>
        </authorList>
    </citation>
    <scope>INTERACTION WITH EB1</scope>
    <scope>SUBCELLULAR LOCATION</scope>
    <scope>DISRUPTION PHENOTYPE</scope>
    <scope>MUTAGENESIS OF 151-ILE-PRO-152 AND 170-ILE-PRO-171</scope>
</reference>
<protein>
    <recommendedName>
        <fullName evidence="4">Kinetochore and Eb1-associated basic protein</fullName>
    </recommendedName>
</protein>
<evidence type="ECO:0000255" key="1"/>
<evidence type="ECO:0000256" key="2">
    <source>
        <dbReference type="SAM" id="MobiDB-lite"/>
    </source>
</evidence>
<evidence type="ECO:0000269" key="3">
    <source>
    </source>
</evidence>
<evidence type="ECO:0000303" key="4">
    <source>
    </source>
</evidence>
<evidence type="ECO:0000305" key="5"/>
<evidence type="ECO:0000312" key="6">
    <source>
        <dbReference type="EMBL" id="AAK93101.1"/>
    </source>
</evidence>
<evidence type="ECO:0000312" key="7">
    <source>
        <dbReference type="EMBL" id="ADY17727.1"/>
    </source>
</evidence>
<evidence type="ECO:0000312" key="8">
    <source>
        <dbReference type="FlyBase" id="FBgn0028952"/>
    </source>
</evidence>
<evidence type="ECO:0000312" key="9">
    <source>
        <dbReference type="Proteomes" id="UP000000803"/>
    </source>
</evidence>
<name>KEBAB_DROME</name>
<comment type="subunit">
    <text evidence="3">Interacts with Eb1 via the two SxIP motifs; the interaction is not required for kebab kinetochore localization.</text>
</comment>
<comment type="subcellular location">
    <subcellularLocation>
        <location evidence="3">Cytoplasm</location>
    </subcellularLocation>
    <subcellularLocation>
        <location evidence="3">Cytoplasm</location>
        <location evidence="3">Perinuclear region</location>
    </subcellularLocation>
    <subcellularLocation>
        <location evidence="3">Chromosome</location>
        <location evidence="3">Centromere</location>
        <location evidence="3">Kinetochore</location>
    </subcellularLocation>
    <subcellularLocation>
        <location evidence="3">Cytoplasm</location>
        <location evidence="3">Cytoskeleton</location>
        <location evidence="3">Spindle</location>
    </subcellularLocation>
    <text evidence="3">During metaphase expressed in the kinetochores. During anaphase expression in the kinetochores progressively increases, and at late anaphase it is also expressed in the microtubules, specifically in the central spindle and centrosomal region. During telophase expression increases in the microtubules, and it is associated with residual spindle microtubules between chromosomes that have separated. At interphase it is expressed in the cytoplasm particularly around the nucleus.</text>
</comment>
<comment type="alternative products">
    <event type="alternative splicing"/>
    <isoform>
        <id>F0JAI6-1</id>
        <name evidence="8">B</name>
        <sequence type="displayed"/>
    </isoform>
    <isoform>
        <id>F0JAI6-2</id>
        <name evidence="8">A</name>
        <sequence type="described" ref="VSP_058659"/>
    </isoform>
</comment>
<comment type="disruption phenotype">
    <text evidence="3">No visible phenotype. Flies are viable and fertile. RNAi-mediated knockdown does not affect mitotic progression.</text>
</comment>
<feature type="chain" id="PRO_0000438398" description="Kinetochore and Eb1-associated basic protein">
    <location>
        <begin position="1"/>
        <end position="548"/>
    </location>
</feature>
<feature type="region of interest" description="Disordered" evidence="2">
    <location>
        <begin position="1"/>
        <end position="51"/>
    </location>
</feature>
<feature type="region of interest" description="Disordered" evidence="2">
    <location>
        <begin position="82"/>
        <end position="181"/>
    </location>
</feature>
<feature type="region of interest" description="Important for kinetochore and microtubule localization" evidence="3">
    <location>
        <begin position="100"/>
        <end position="253"/>
    </location>
</feature>
<feature type="region of interest" description="CH (calponin-homology)-like region, which is not required for kinetochore and microtubule localization" evidence="3">
    <location>
        <begin position="237"/>
        <end position="372"/>
    </location>
</feature>
<feature type="coiled-coil region" evidence="1">
    <location>
        <begin position="386"/>
        <end position="457"/>
    </location>
</feature>
<feature type="short sequence motif" description="SXIP motif 1" evidence="3">
    <location>
        <begin position="149"/>
        <end position="152"/>
    </location>
</feature>
<feature type="short sequence motif" description="SXIP motif 2" evidence="3">
    <location>
        <begin position="168"/>
        <end position="171"/>
    </location>
</feature>
<feature type="compositionally biased region" description="Basic and acidic residues" evidence="2">
    <location>
        <begin position="20"/>
        <end position="29"/>
    </location>
</feature>
<feature type="compositionally biased region" description="Basic and acidic residues" evidence="2">
    <location>
        <begin position="104"/>
        <end position="116"/>
    </location>
</feature>
<feature type="compositionally biased region" description="Basic and acidic residues" evidence="2">
    <location>
        <begin position="127"/>
        <end position="141"/>
    </location>
</feature>
<feature type="compositionally biased region" description="Polar residues" evidence="2">
    <location>
        <begin position="144"/>
        <end position="155"/>
    </location>
</feature>
<feature type="compositionally biased region" description="Basic and acidic residues" evidence="2">
    <location>
        <begin position="156"/>
        <end position="165"/>
    </location>
</feature>
<feature type="compositionally biased region" description="Polar residues" evidence="2">
    <location>
        <begin position="166"/>
        <end position="175"/>
    </location>
</feature>
<feature type="splice variant" id="VSP_058659" description="In isoform A.">
    <location>
        <position position="116"/>
    </location>
</feature>
<feature type="mutagenesis site" description="Slight reduction in Eb1 binding. No effect on kinetochore and microtubule localization." evidence="3">
    <original>IP</original>
    <variation>NT</variation>
    <location>
        <begin position="151"/>
        <end position="152"/>
    </location>
</feature>
<feature type="mutagenesis site" description="No effect on Eb1 binding, and no effect on kinetochore and microtubule localization." evidence="3">
    <original>IP</original>
    <variation>RT</variation>
    <location>
        <begin position="170"/>
        <end position="171"/>
    </location>
</feature>
<accession>F0JAI6</accession>
<accession>Q961C7</accession>
<accession>Q9VQ69</accession>
<organism evidence="7">
    <name type="scientific">Drosophila melanogaster</name>
    <name type="common">Fruit fly</name>
    <dbReference type="NCBI Taxonomy" id="7227"/>
    <lineage>
        <taxon>Eukaryota</taxon>
        <taxon>Metazoa</taxon>
        <taxon>Ecdysozoa</taxon>
        <taxon>Arthropoda</taxon>
        <taxon>Hexapoda</taxon>
        <taxon>Insecta</taxon>
        <taxon>Pterygota</taxon>
        <taxon>Neoptera</taxon>
        <taxon>Endopterygota</taxon>
        <taxon>Diptera</taxon>
        <taxon>Brachycera</taxon>
        <taxon>Muscomorpha</taxon>
        <taxon>Ephydroidea</taxon>
        <taxon>Drosophilidae</taxon>
        <taxon>Drosophila</taxon>
        <taxon>Sophophora</taxon>
    </lineage>
</organism>
<proteinExistence type="evidence at protein level"/>